<sequence>MSPQTETKASVGFKAGVKDYRLTYYTPEYETLDTDILAAFRVTPQPGVPPEEAGAAVAAESSTGTWTSVWTDGLTSLDRYKGRCYNIEPVAGEENQYICYVAYPLDLFEEGSVTNMFTSIVGNVFGFKALRALRLEDLRIPVAYVKTFQGPPHGIQVERDKLNKYGRPLLGCTIKPKLGLSAKNYGRACYECLRGGLDFTKDDENVNSQPFMRWRDRFLFCAEAIYKSQAETGEIKGHYLNATAGTCEEMIKRAVFARELGVPIVMHDYLTGGFTANTSLSQYCRDNGLLLHIHRAMHAVIDRQKNHGMHFRVLAKALRLSGGDHIHSGTVVGKLEGERDITLGFVDLLRDDYTEKDRSRGIFFTQSWVSTPGVLPVASGGIHVWHMPALTEIFGDDSVLQFGGGTLGHPWGNAPGAVANRVALEACVQARNEGRDLAREGNTIIREAAKWSPELAAACEVWKEIKFEFPAMDTI</sequence>
<accession>P48682</accession>
<comment type="function">
    <text evidence="1">RuBisCO catalyzes two reactions: the carboxylation of D-ribulose 1,5-bisphosphate, the primary event in carbon dioxide fixation, as well as the oxidative fragmentation of the pentose substrate in the photorespiration process. Both reactions occur simultaneously and in competition at the same active site.</text>
</comment>
<comment type="catalytic activity">
    <reaction evidence="1">
        <text>2 (2R)-3-phosphoglycerate + 2 H(+) = D-ribulose 1,5-bisphosphate + CO2 + H2O</text>
        <dbReference type="Rhea" id="RHEA:23124"/>
        <dbReference type="ChEBI" id="CHEBI:15377"/>
        <dbReference type="ChEBI" id="CHEBI:15378"/>
        <dbReference type="ChEBI" id="CHEBI:16526"/>
        <dbReference type="ChEBI" id="CHEBI:57870"/>
        <dbReference type="ChEBI" id="CHEBI:58272"/>
        <dbReference type="EC" id="4.1.1.39"/>
    </reaction>
</comment>
<comment type="catalytic activity">
    <reaction evidence="1">
        <text>D-ribulose 1,5-bisphosphate + O2 = 2-phosphoglycolate + (2R)-3-phosphoglycerate + 2 H(+)</text>
        <dbReference type="Rhea" id="RHEA:36631"/>
        <dbReference type="ChEBI" id="CHEBI:15378"/>
        <dbReference type="ChEBI" id="CHEBI:15379"/>
        <dbReference type="ChEBI" id="CHEBI:57870"/>
        <dbReference type="ChEBI" id="CHEBI:58033"/>
        <dbReference type="ChEBI" id="CHEBI:58272"/>
    </reaction>
</comment>
<comment type="cofactor">
    <cofactor evidence="1">
        <name>Mg(2+)</name>
        <dbReference type="ChEBI" id="CHEBI:18420"/>
    </cofactor>
    <text evidence="1">Binds 1 Mg(2+) ion per subunit.</text>
</comment>
<comment type="subunit">
    <text evidence="1">Heterohexadecamer of 8 large chains and 8 small chains; disulfide-linked. The disulfide link is formed within the large subunit homodimers.</text>
</comment>
<comment type="subcellular location">
    <subcellularLocation>
        <location>Plastid</location>
        <location>Chloroplast</location>
    </subcellularLocation>
</comment>
<comment type="PTM">
    <text evidence="1">The disulfide bond which can form in the large chain dimeric partners within the hexadecamer appears to be associated with oxidative stress and protein turnover.</text>
</comment>
<comment type="miscellaneous">
    <text evidence="1">The basic functional RuBisCO is composed of a large chain homodimer in a 'head-to-tail' conformation. In form I RuBisCO this homodimer is arranged in a barrel-like tetramer with the small subunits forming a tetrameric 'cap' on each end of the 'barrel'.</text>
</comment>
<comment type="similarity">
    <text evidence="1">Belongs to the RuBisCO large chain family. Type I subfamily.</text>
</comment>
<reference key="1">
    <citation type="journal article" date="1992" name="Taxon">
        <title>Nucleotide sequence of Amaranthus tricolor rbcL.</title>
        <authorList>
            <person name="Rettig J.H."/>
            <person name="Wilson H.D."/>
            <person name="Manhart J.R."/>
        </authorList>
    </citation>
    <scope>NUCLEOTIDE SEQUENCE [GENOMIC DNA]</scope>
</reference>
<keyword id="KW-0007">Acetylation</keyword>
<keyword id="KW-0113">Calvin cycle</keyword>
<keyword id="KW-0120">Carbon dioxide fixation</keyword>
<keyword id="KW-0150">Chloroplast</keyword>
<keyword id="KW-1015">Disulfide bond</keyword>
<keyword id="KW-0456">Lyase</keyword>
<keyword id="KW-0460">Magnesium</keyword>
<keyword id="KW-0479">Metal-binding</keyword>
<keyword id="KW-0488">Methylation</keyword>
<keyword id="KW-0503">Monooxygenase</keyword>
<keyword id="KW-0560">Oxidoreductase</keyword>
<keyword id="KW-0601">Photorespiration</keyword>
<keyword id="KW-0602">Photosynthesis</keyword>
<keyword id="KW-0934">Plastid</keyword>
<feature type="propeptide" id="PRO_0000031111" evidence="1">
    <location>
        <begin position="1"/>
        <end position="2"/>
    </location>
</feature>
<feature type="chain" id="PRO_0000031112" description="Ribulose bisphosphate carboxylase large chain">
    <location>
        <begin position="3"/>
        <end position="475"/>
    </location>
</feature>
<feature type="active site" description="Proton acceptor" evidence="1">
    <location>
        <position position="175"/>
    </location>
</feature>
<feature type="active site" description="Proton acceptor" evidence="1">
    <location>
        <position position="294"/>
    </location>
</feature>
<feature type="binding site" description="in homodimeric partner" evidence="1">
    <location>
        <position position="123"/>
    </location>
    <ligand>
        <name>substrate</name>
    </ligand>
</feature>
<feature type="binding site" evidence="1">
    <location>
        <position position="173"/>
    </location>
    <ligand>
        <name>substrate</name>
    </ligand>
</feature>
<feature type="binding site" evidence="1">
    <location>
        <position position="177"/>
    </location>
    <ligand>
        <name>substrate</name>
    </ligand>
</feature>
<feature type="binding site" description="via carbamate group" evidence="1">
    <location>
        <position position="201"/>
    </location>
    <ligand>
        <name>Mg(2+)</name>
        <dbReference type="ChEBI" id="CHEBI:18420"/>
    </ligand>
</feature>
<feature type="binding site" evidence="1">
    <location>
        <position position="203"/>
    </location>
    <ligand>
        <name>Mg(2+)</name>
        <dbReference type="ChEBI" id="CHEBI:18420"/>
    </ligand>
</feature>
<feature type="binding site" evidence="1">
    <location>
        <position position="204"/>
    </location>
    <ligand>
        <name>Mg(2+)</name>
        <dbReference type="ChEBI" id="CHEBI:18420"/>
    </ligand>
</feature>
<feature type="binding site" evidence="1">
    <location>
        <position position="295"/>
    </location>
    <ligand>
        <name>substrate</name>
    </ligand>
</feature>
<feature type="binding site" evidence="1">
    <location>
        <position position="327"/>
    </location>
    <ligand>
        <name>substrate</name>
    </ligand>
</feature>
<feature type="binding site" evidence="1">
    <location>
        <position position="379"/>
    </location>
    <ligand>
        <name>substrate</name>
    </ligand>
</feature>
<feature type="site" description="Transition state stabilizer" evidence="1">
    <location>
        <position position="334"/>
    </location>
</feature>
<feature type="modified residue" description="N-acetylproline" evidence="1">
    <location>
        <position position="3"/>
    </location>
</feature>
<feature type="modified residue" description="N6,N6,N6-trimethyllysine" evidence="1">
    <location>
        <position position="14"/>
    </location>
</feature>
<feature type="modified residue" description="N6-carboxylysine" evidence="1">
    <location>
        <position position="201"/>
    </location>
</feature>
<feature type="disulfide bond" description="Interchain; in linked form" evidence="1">
    <location>
        <position position="247"/>
    </location>
</feature>
<protein>
    <recommendedName>
        <fullName evidence="1">Ribulose bisphosphate carboxylase large chain</fullName>
        <shortName evidence="1">RuBisCO large subunit</shortName>
        <ecNumber evidence="1">4.1.1.39</ecNumber>
    </recommendedName>
</protein>
<proteinExistence type="inferred from homology"/>
<organism>
    <name type="scientific">Amaranthus tricolor</name>
    <name type="common">Joseph's coat</name>
    <name type="synonym">Amaranthus gangeticus</name>
    <dbReference type="NCBI Taxonomy" id="29722"/>
    <lineage>
        <taxon>Eukaryota</taxon>
        <taxon>Viridiplantae</taxon>
        <taxon>Streptophyta</taxon>
        <taxon>Embryophyta</taxon>
        <taxon>Tracheophyta</taxon>
        <taxon>Spermatophyta</taxon>
        <taxon>Magnoliopsida</taxon>
        <taxon>eudicotyledons</taxon>
        <taxon>Gunneridae</taxon>
        <taxon>Pentapetalae</taxon>
        <taxon>Caryophyllales</taxon>
        <taxon>Amaranthaceae</taxon>
        <taxon>Amaranthus</taxon>
    </lineage>
</organism>
<name>RBL_AMATR</name>
<geneLocation type="chloroplast"/>
<gene>
    <name evidence="1" type="primary">rbcL</name>
</gene>
<dbReference type="EC" id="4.1.1.39" evidence="1"/>
<dbReference type="EMBL" id="X53980">
    <property type="protein sequence ID" value="CAA37930.1"/>
    <property type="molecule type" value="Genomic_DNA"/>
</dbReference>
<dbReference type="PIR" id="S43183">
    <property type="entry name" value="S43183"/>
</dbReference>
<dbReference type="RefSeq" id="YP_010425974.1">
    <property type="nucleotide sequence ID" value="NC_065013.1"/>
</dbReference>
<dbReference type="SMR" id="P48682"/>
<dbReference type="GeneID" id="73918798"/>
<dbReference type="OrthoDB" id="563909at2759"/>
<dbReference type="GO" id="GO:0009507">
    <property type="term" value="C:chloroplast"/>
    <property type="evidence" value="ECO:0007669"/>
    <property type="project" value="UniProtKB-SubCell"/>
</dbReference>
<dbReference type="GO" id="GO:0000287">
    <property type="term" value="F:magnesium ion binding"/>
    <property type="evidence" value="ECO:0007669"/>
    <property type="project" value="UniProtKB-UniRule"/>
</dbReference>
<dbReference type="GO" id="GO:0004497">
    <property type="term" value="F:monooxygenase activity"/>
    <property type="evidence" value="ECO:0007669"/>
    <property type="project" value="UniProtKB-KW"/>
</dbReference>
<dbReference type="GO" id="GO:0016984">
    <property type="term" value="F:ribulose-bisphosphate carboxylase activity"/>
    <property type="evidence" value="ECO:0007669"/>
    <property type="project" value="UniProtKB-UniRule"/>
</dbReference>
<dbReference type="GO" id="GO:0009853">
    <property type="term" value="P:photorespiration"/>
    <property type="evidence" value="ECO:0007669"/>
    <property type="project" value="UniProtKB-KW"/>
</dbReference>
<dbReference type="GO" id="GO:0019253">
    <property type="term" value="P:reductive pentose-phosphate cycle"/>
    <property type="evidence" value="ECO:0007669"/>
    <property type="project" value="UniProtKB-UniRule"/>
</dbReference>
<dbReference type="CDD" id="cd08212">
    <property type="entry name" value="RuBisCO_large_I"/>
    <property type="match status" value="1"/>
</dbReference>
<dbReference type="FunFam" id="3.20.20.110:FF:000001">
    <property type="entry name" value="Ribulose bisphosphate carboxylase large chain"/>
    <property type="match status" value="1"/>
</dbReference>
<dbReference type="FunFam" id="3.30.70.150:FF:000001">
    <property type="entry name" value="Ribulose bisphosphate carboxylase large chain"/>
    <property type="match status" value="1"/>
</dbReference>
<dbReference type="Gene3D" id="3.20.20.110">
    <property type="entry name" value="Ribulose bisphosphate carboxylase, large subunit, C-terminal domain"/>
    <property type="match status" value="1"/>
</dbReference>
<dbReference type="Gene3D" id="3.30.70.150">
    <property type="entry name" value="RuBisCO large subunit, N-terminal domain"/>
    <property type="match status" value="1"/>
</dbReference>
<dbReference type="HAMAP" id="MF_01338">
    <property type="entry name" value="RuBisCO_L_type1"/>
    <property type="match status" value="1"/>
</dbReference>
<dbReference type="InterPro" id="IPR033966">
    <property type="entry name" value="RuBisCO"/>
</dbReference>
<dbReference type="InterPro" id="IPR020878">
    <property type="entry name" value="RuBisCo_large_chain_AS"/>
</dbReference>
<dbReference type="InterPro" id="IPR000685">
    <property type="entry name" value="RuBisCO_lsu_C"/>
</dbReference>
<dbReference type="InterPro" id="IPR036376">
    <property type="entry name" value="RuBisCO_lsu_C_sf"/>
</dbReference>
<dbReference type="InterPro" id="IPR017443">
    <property type="entry name" value="RuBisCO_lsu_fd_N"/>
</dbReference>
<dbReference type="InterPro" id="IPR036422">
    <property type="entry name" value="RuBisCO_lsu_N_sf"/>
</dbReference>
<dbReference type="InterPro" id="IPR020888">
    <property type="entry name" value="RuBisCO_lsuI"/>
</dbReference>
<dbReference type="NCBIfam" id="NF003252">
    <property type="entry name" value="PRK04208.1"/>
    <property type="match status" value="1"/>
</dbReference>
<dbReference type="PANTHER" id="PTHR42704">
    <property type="entry name" value="RIBULOSE BISPHOSPHATE CARBOXYLASE"/>
    <property type="match status" value="1"/>
</dbReference>
<dbReference type="PANTHER" id="PTHR42704:SF15">
    <property type="entry name" value="RIBULOSE BISPHOSPHATE CARBOXYLASE LARGE CHAIN"/>
    <property type="match status" value="1"/>
</dbReference>
<dbReference type="Pfam" id="PF00016">
    <property type="entry name" value="RuBisCO_large"/>
    <property type="match status" value="1"/>
</dbReference>
<dbReference type="Pfam" id="PF02788">
    <property type="entry name" value="RuBisCO_large_N"/>
    <property type="match status" value="1"/>
</dbReference>
<dbReference type="SFLD" id="SFLDG01052">
    <property type="entry name" value="RuBisCO"/>
    <property type="match status" value="1"/>
</dbReference>
<dbReference type="SFLD" id="SFLDS00014">
    <property type="entry name" value="RuBisCO"/>
    <property type="match status" value="1"/>
</dbReference>
<dbReference type="SFLD" id="SFLDG00301">
    <property type="entry name" value="RuBisCO-like_proteins"/>
    <property type="match status" value="1"/>
</dbReference>
<dbReference type="SUPFAM" id="SSF51649">
    <property type="entry name" value="RuBisCo, C-terminal domain"/>
    <property type="match status" value="1"/>
</dbReference>
<dbReference type="SUPFAM" id="SSF54966">
    <property type="entry name" value="RuBisCO, large subunit, small (N-terminal) domain"/>
    <property type="match status" value="1"/>
</dbReference>
<dbReference type="PROSITE" id="PS00157">
    <property type="entry name" value="RUBISCO_LARGE"/>
    <property type="match status" value="1"/>
</dbReference>
<evidence type="ECO:0000255" key="1">
    <source>
        <dbReference type="HAMAP-Rule" id="MF_01338"/>
    </source>
</evidence>